<feature type="chain" id="PRO_1000204856" description="Methionine synthase">
    <location>
        <begin position="1"/>
        <end position="332"/>
    </location>
</feature>
<feature type="binding site" evidence="1">
    <location>
        <position position="211"/>
    </location>
    <ligand>
        <name>Zn(2+)</name>
        <dbReference type="ChEBI" id="CHEBI:29105"/>
        <note>catalytic</note>
    </ligand>
</feature>
<feature type="binding site" evidence="1">
    <location>
        <position position="213"/>
    </location>
    <ligand>
        <name>Zn(2+)</name>
        <dbReference type="ChEBI" id="CHEBI:29105"/>
        <note>catalytic</note>
    </ligand>
</feature>
<feature type="binding site" evidence="1">
    <location>
        <position position="296"/>
    </location>
    <ligand>
        <name>Zn(2+)</name>
        <dbReference type="ChEBI" id="CHEBI:29105"/>
        <note>catalytic</note>
    </ligand>
</feature>
<name>METE_SACI4</name>
<reference key="1">
    <citation type="journal article" date="2009" name="Proc. Natl. Acad. Sci. U.S.A.">
        <title>Biogeography of the Sulfolobus islandicus pan-genome.</title>
        <authorList>
            <person name="Reno M.L."/>
            <person name="Held N.L."/>
            <person name="Fields C.J."/>
            <person name="Burke P.V."/>
            <person name="Whitaker R.J."/>
        </authorList>
    </citation>
    <scope>NUCLEOTIDE SEQUENCE [LARGE SCALE GENOMIC DNA]</scope>
    <source>
        <strain>M.14.25 / Kamchatka #1</strain>
    </source>
</reference>
<organism>
    <name type="scientific">Saccharolobus islandicus (strain M.14.25 / Kamchatka #1)</name>
    <name type="common">Sulfolobus islandicus</name>
    <dbReference type="NCBI Taxonomy" id="427317"/>
    <lineage>
        <taxon>Archaea</taxon>
        <taxon>Thermoproteota</taxon>
        <taxon>Thermoprotei</taxon>
        <taxon>Sulfolobales</taxon>
        <taxon>Sulfolobaceae</taxon>
        <taxon>Saccharolobus</taxon>
    </lineage>
</organism>
<comment type="function">
    <text evidence="1">Catalyzes the transfer of a methyl group to L-homocysteine resulting in methionine formation. The physiological methyl donor is unknown.</text>
</comment>
<comment type="cofactor">
    <cofactor evidence="1">
        <name>Zn(2+)</name>
        <dbReference type="ChEBI" id="CHEBI:29105"/>
    </cofactor>
    <text evidence="1">Binds 1 zinc ion per subunit.</text>
</comment>
<comment type="pathway">
    <text evidence="1">Amino-acid biosynthesis; L-methionine biosynthesis via de novo pathway.</text>
</comment>
<comment type="similarity">
    <text evidence="1 2">Belongs to the archaeal MetE family.</text>
</comment>
<protein>
    <recommendedName>
        <fullName evidence="1">Methionine synthase</fullName>
        <ecNumber evidence="1">2.1.1.-</ecNumber>
    </recommendedName>
    <alternativeName>
        <fullName evidence="1">Homocysteine methyltransferase</fullName>
    </alternativeName>
</protein>
<gene>
    <name evidence="1" type="primary">metE</name>
    <name type="ordered locus">M1425_1696</name>
</gene>
<keyword id="KW-0028">Amino-acid biosynthesis</keyword>
<keyword id="KW-0479">Metal-binding</keyword>
<keyword id="KW-0486">Methionine biosynthesis</keyword>
<keyword id="KW-0489">Methyltransferase</keyword>
<keyword id="KW-0808">Transferase</keyword>
<keyword id="KW-0862">Zinc</keyword>
<sequence length="332" mass="38258">MSKLPLLPTTVIGSYPRPKWLRESIRLHKAGKISDEDLQEAFNDAVIAVLKDHYNAGVDVPTDGEVRRDEMVEFFAERIKGFKFYGPVRVWGTAYYRKPSVVSKIEYKKPMLVDEFTFAKSVSYTDNLKITITGPYTIAEWSYNEYYKNKKDLVFDLAKAINQEIKNLVEAGAKIIQIDEPALHTRREDVSWGVEAVNEAVKGVNAKLVMHICYGEYSFVAPYLNELKVDQINFAFKIYNYKPLELLKRYGFDKELGAGVIDVHNRRIETSEEVANDIRKILEYFTPEKVWINPDCGLKLLSRKIAYQKLVSMVEGTKVVREELKRKGYSVD</sequence>
<dbReference type="EC" id="2.1.1.-" evidence="1"/>
<dbReference type="EMBL" id="CP001400">
    <property type="protein sequence ID" value="ACP38445.1"/>
    <property type="molecule type" value="Genomic_DNA"/>
</dbReference>
<dbReference type="RefSeq" id="WP_012711676.1">
    <property type="nucleotide sequence ID" value="NC_012588.1"/>
</dbReference>
<dbReference type="SMR" id="C3MWZ5"/>
<dbReference type="KEGG" id="sia:M1425_1696"/>
<dbReference type="HOGENOM" id="CLU_040013_3_2_2"/>
<dbReference type="UniPathway" id="UPA00051"/>
<dbReference type="Proteomes" id="UP000001350">
    <property type="component" value="Chromosome"/>
</dbReference>
<dbReference type="GO" id="GO:0003871">
    <property type="term" value="F:5-methyltetrahydropteroyltriglutamate-homocysteine S-methyltransferase activity"/>
    <property type="evidence" value="ECO:0007669"/>
    <property type="project" value="InterPro"/>
</dbReference>
<dbReference type="GO" id="GO:0008270">
    <property type="term" value="F:zinc ion binding"/>
    <property type="evidence" value="ECO:0007669"/>
    <property type="project" value="InterPro"/>
</dbReference>
<dbReference type="GO" id="GO:0009086">
    <property type="term" value="P:methionine biosynthetic process"/>
    <property type="evidence" value="ECO:0007669"/>
    <property type="project" value="UniProtKB-UniRule"/>
</dbReference>
<dbReference type="GO" id="GO:0032259">
    <property type="term" value="P:methylation"/>
    <property type="evidence" value="ECO:0007669"/>
    <property type="project" value="UniProtKB-KW"/>
</dbReference>
<dbReference type="CDD" id="cd03311">
    <property type="entry name" value="CIMS_C_terminal_like"/>
    <property type="match status" value="1"/>
</dbReference>
<dbReference type="Gene3D" id="3.20.20.210">
    <property type="match status" value="1"/>
</dbReference>
<dbReference type="HAMAP" id="MF_00288">
    <property type="entry name" value="MetE"/>
    <property type="match status" value="1"/>
</dbReference>
<dbReference type="InterPro" id="IPR002629">
    <property type="entry name" value="Met_Synth_C/arc"/>
</dbReference>
<dbReference type="InterPro" id="IPR022921">
    <property type="entry name" value="MetE_arc"/>
</dbReference>
<dbReference type="InterPro" id="IPR038071">
    <property type="entry name" value="UROD/MetE-like_sf"/>
</dbReference>
<dbReference type="NCBIfam" id="NF003317">
    <property type="entry name" value="PRK04326.1"/>
    <property type="match status" value="1"/>
</dbReference>
<dbReference type="PANTHER" id="PTHR30519">
    <property type="entry name" value="5-METHYLTETRAHYDROPTEROYLTRIGLUTAMATE--HOMOCYSTEINE METHYLTRANSFERASE"/>
    <property type="match status" value="1"/>
</dbReference>
<dbReference type="Pfam" id="PF01717">
    <property type="entry name" value="Meth_synt_2"/>
    <property type="match status" value="1"/>
</dbReference>
<dbReference type="SUPFAM" id="SSF51726">
    <property type="entry name" value="UROD/MetE-like"/>
    <property type="match status" value="1"/>
</dbReference>
<accession>C3MWZ5</accession>
<evidence type="ECO:0000255" key="1">
    <source>
        <dbReference type="HAMAP-Rule" id="MF_00288"/>
    </source>
</evidence>
<evidence type="ECO:0000305" key="2"/>
<proteinExistence type="inferred from homology"/>